<evidence type="ECO:0000255" key="1"/>
<evidence type="ECO:0000256" key="2">
    <source>
        <dbReference type="SAM" id="MobiDB-lite"/>
    </source>
</evidence>
<evidence type="ECO:0000305" key="3"/>
<comment type="subcellular location">
    <subcellularLocation>
        <location evidence="3">Cell membrane</location>
        <topology evidence="3">Multi-pass membrane protein</topology>
    </subcellularLocation>
</comment>
<comment type="similarity">
    <text evidence="3">Belongs to the SURF1 family.</text>
</comment>
<gene>
    <name type="ordered locus">MT2294</name>
</gene>
<organism>
    <name type="scientific">Mycobacterium tuberculosis (strain CDC 1551 / Oshkosh)</name>
    <dbReference type="NCBI Taxonomy" id="83331"/>
    <lineage>
        <taxon>Bacteria</taxon>
        <taxon>Bacillati</taxon>
        <taxon>Actinomycetota</taxon>
        <taxon>Actinomycetes</taxon>
        <taxon>Mycobacteriales</taxon>
        <taxon>Mycobacteriaceae</taxon>
        <taxon>Mycobacterium</taxon>
        <taxon>Mycobacterium tuberculosis complex</taxon>
    </lineage>
</organism>
<protein>
    <recommendedName>
        <fullName>Uncharacterized SURF1-like protein MT2294</fullName>
    </recommendedName>
</protein>
<dbReference type="EMBL" id="AE000516">
    <property type="protein sequence ID" value="AAK46578.1"/>
    <property type="molecule type" value="Genomic_DNA"/>
</dbReference>
<dbReference type="PIR" id="G70777">
    <property type="entry name" value="G70777"/>
</dbReference>
<dbReference type="RefSeq" id="WP_003411514.1">
    <property type="nucleotide sequence ID" value="NZ_KK341227.1"/>
</dbReference>
<dbReference type="KEGG" id="mtc:MT2294"/>
<dbReference type="PATRIC" id="fig|83331.31.peg.2471"/>
<dbReference type="HOGENOM" id="CLU_047737_0_0_11"/>
<dbReference type="Proteomes" id="UP000001020">
    <property type="component" value="Chromosome"/>
</dbReference>
<dbReference type="GO" id="GO:0005886">
    <property type="term" value="C:plasma membrane"/>
    <property type="evidence" value="ECO:0007669"/>
    <property type="project" value="UniProtKB-SubCell"/>
</dbReference>
<dbReference type="CDD" id="cd06662">
    <property type="entry name" value="SURF1"/>
    <property type="match status" value="1"/>
</dbReference>
<dbReference type="InterPro" id="IPR002994">
    <property type="entry name" value="Surf1/Shy1"/>
</dbReference>
<dbReference type="InterPro" id="IPR045214">
    <property type="entry name" value="Surf1/Surf4"/>
</dbReference>
<dbReference type="PANTHER" id="PTHR23427">
    <property type="entry name" value="SURFEIT LOCUS PROTEIN"/>
    <property type="match status" value="1"/>
</dbReference>
<dbReference type="PANTHER" id="PTHR23427:SF2">
    <property type="entry name" value="SURFEIT LOCUS PROTEIN 1"/>
    <property type="match status" value="1"/>
</dbReference>
<dbReference type="Pfam" id="PF02104">
    <property type="entry name" value="SURF1"/>
    <property type="match status" value="1"/>
</dbReference>
<dbReference type="PROSITE" id="PS50895">
    <property type="entry name" value="SURF1"/>
    <property type="match status" value="1"/>
</dbReference>
<sequence length="271" mass="29762">MPRLAFLLRPGWLALALVVVAFTYLCFTVLAPWQLGKNAKTSRENQQIRYSLDTPPVPLKTLLPQQDSSAPDAQWRRVTATGQYLPDVQVLARLRVVEGDQAFEVLAPFVVDGGPTVLVDRGYVRPQVGSHVPPIPRLPVQTVTITARLRDSEPSVAGKDPFVRDGFQQVYSINTGQVAALTGVQLAGSYLQLIEDQPGGLGVLGVPHLDPGPFLSYGIQWISFGILAPIGLGYFAYAEIRARRREKAGSPPPDKPMTVEQKLADRYGRRR</sequence>
<proteinExistence type="inferred from homology"/>
<reference key="1">
    <citation type="journal article" date="2002" name="J. Bacteriol.">
        <title>Whole-genome comparison of Mycobacterium tuberculosis clinical and laboratory strains.</title>
        <authorList>
            <person name="Fleischmann R.D."/>
            <person name="Alland D."/>
            <person name="Eisen J.A."/>
            <person name="Carpenter L."/>
            <person name="White O."/>
            <person name="Peterson J.D."/>
            <person name="DeBoy R.T."/>
            <person name="Dodson R.J."/>
            <person name="Gwinn M.L."/>
            <person name="Haft D.H."/>
            <person name="Hickey E.K."/>
            <person name="Kolonay J.F."/>
            <person name="Nelson W.C."/>
            <person name="Umayam L.A."/>
            <person name="Ermolaeva M.D."/>
            <person name="Salzberg S.L."/>
            <person name="Delcher A."/>
            <person name="Utterback T.R."/>
            <person name="Weidman J.F."/>
            <person name="Khouri H.M."/>
            <person name="Gill J."/>
            <person name="Mikula A."/>
            <person name="Bishai W."/>
            <person name="Jacobs W.R. Jr."/>
            <person name="Venter J.C."/>
            <person name="Fraser C.M."/>
        </authorList>
    </citation>
    <scope>NUCLEOTIDE SEQUENCE [LARGE SCALE GENOMIC DNA]</scope>
    <source>
        <strain>CDC 1551 / Oshkosh</strain>
    </source>
</reference>
<name>Y2235_MYCTO</name>
<keyword id="KW-1003">Cell membrane</keyword>
<keyword id="KW-0472">Membrane</keyword>
<keyword id="KW-1185">Reference proteome</keyword>
<keyword id="KW-0812">Transmembrane</keyword>
<keyword id="KW-1133">Transmembrane helix</keyword>
<accession>P9WGA6</accession>
<accession>L0T907</accession>
<accession>P66883</accession>
<accession>Q10517</accession>
<feature type="chain" id="PRO_0000428395" description="Uncharacterized SURF1-like protein MT2294">
    <location>
        <begin position="1"/>
        <end position="271"/>
    </location>
</feature>
<feature type="transmembrane region" description="Helical" evidence="1">
    <location>
        <begin position="11"/>
        <end position="33"/>
    </location>
</feature>
<feature type="transmembrane region" description="Helical" evidence="1">
    <location>
        <begin position="172"/>
        <end position="194"/>
    </location>
</feature>
<feature type="transmembrane region" description="Helical" evidence="1">
    <location>
        <begin position="214"/>
        <end position="236"/>
    </location>
</feature>
<feature type="region of interest" description="Disordered" evidence="2">
    <location>
        <begin position="245"/>
        <end position="271"/>
    </location>
</feature>
<feature type="compositionally biased region" description="Basic and acidic residues" evidence="2">
    <location>
        <begin position="262"/>
        <end position="271"/>
    </location>
</feature>